<gene>
    <name evidence="1" type="primary">rpoC</name>
    <name type="ordered locus">PSPPH_4598</name>
</gene>
<accession>Q48D30</accession>
<proteinExistence type="inferred from homology"/>
<keyword id="KW-0240">DNA-directed RNA polymerase</keyword>
<keyword id="KW-0460">Magnesium</keyword>
<keyword id="KW-0479">Metal-binding</keyword>
<keyword id="KW-0548">Nucleotidyltransferase</keyword>
<keyword id="KW-0804">Transcription</keyword>
<keyword id="KW-0808">Transferase</keyword>
<keyword id="KW-0862">Zinc</keyword>
<evidence type="ECO:0000255" key="1">
    <source>
        <dbReference type="HAMAP-Rule" id="MF_01322"/>
    </source>
</evidence>
<sequence>MKDLLNLLKNQGQVEEFDAIRIGLASPEMIRSWSFGEVKKPETINYRTFKPERDGLFCAKIFGPVKDYECLCGKYKRLKHRGVICEKCGVEVALAKVRRERMAHIELASPVAHIWFLKSLPSRIGLLMDMTLRDIERVLYFESYVVIDPGMTTLEKGQLLNDEQYFEALEEFGDDFDARMGAEAVRELLHAIDLEHEIGRLREEIPQTNSETKIKKLSKRLKLMEAFQGSGNLPEWMVLTVLPVLPPDLRPLVPLDGGRFATSDLNDLYRRVINRNNRLKRLLDLSAPDIIVRNEKRMLQEAVDALLDNGRRGRAITGSNKRPLKSLADMIKGKQGRFRQNLLGKRVDYSGRSVITVGPTLRLHQCGLPKKMALELFKPFIFGKLEMRGLATTIKAAKKMVERELPEVWDVLAEVIREHPVLLNRAPTLHRLGIQAFEPVLIEGKAIQLHPLVCAAYNADFDGDQMAVHVPLTLEAQLEARALMMSTNNILSPANGEPIIVPSQDVVLGLYYMTREAINAKGEGRVFADLQEVDRVFRAGEAALHAKVKVRIHETVNDRDGGSVKNTRIVDTTVGRALLFQVVPAGLSYDVVNQPMKKKAISKLINQCYRVVGLKETVIFADQLMYTGFAYSTISGVSIGVNDFVIPDEKARIIDAATEEVKEIESQYASGLVTQGEKYNKVIDLWSKANDEVSKAMMSNLSKEKVIDRHGVEVDQESFNSMYMMADSGARGSAAQIRQLAGMRGLMAKPDGSIIETPITANFREGLSVLQYFISTHGARKGLADTALKTANSGYLTRRLVDVAQDLVVTEVDCGTEHGLLMTPHIEGGDVVEPLGERVLGRVIARDVFKPGTEDVIVPAGTLVDEKWVEFIELNSIDEVIVRSPISCETRYGICAKCYGRDLARGHQVNIGEAVGVIAAQSIGEPGTQLTMRTFHIGGAASRTSAADSVQVKNGGTVRLHNLKHVERVDGHLVAVSRSGELAIADDFGRERERYKLPYGAVISVKEGDKVDAGSIVAKWDPHTHPIVTEMKGTVTYVGMEEGITIKRQTDELTGMTNIEVLDAKDRPAAGKDIRPAVKMVGLDGKDLLLPGTDVPAQYFLPANALVGVADGAQIAIGDVIARIPQETSKTRDITGGLPRVADLFEARRPKEASILAEVSGTIAFGKETKGKRRLVITPNDGSDPYEELIPKWRHLNVFEGEQVNRGEVISDGPSDPHDILRLLGVSALAKYIVNEIQDVYRLQGVKINDKHIETILRQMLRKVEIAESGDSSFIKGDQMELTHVLVENERLSTEDKFVSKFTRVLLGITKASLSTESFISAASFQETTRVLTEAAVTGKRDYLRGLKENVVVGRLIPAGTGLAYHSERKRRREMDKPTRVSASEVEAALTEALNSSGN</sequence>
<reference key="1">
    <citation type="journal article" date="2005" name="J. Bacteriol.">
        <title>Whole-genome sequence analysis of Pseudomonas syringae pv. phaseolicola 1448A reveals divergence among pathovars in genes involved in virulence and transposition.</title>
        <authorList>
            <person name="Joardar V."/>
            <person name="Lindeberg M."/>
            <person name="Jackson R.W."/>
            <person name="Selengut J."/>
            <person name="Dodson R."/>
            <person name="Brinkac L.M."/>
            <person name="Daugherty S.C."/>
            <person name="DeBoy R.T."/>
            <person name="Durkin A.S."/>
            <person name="Gwinn Giglio M."/>
            <person name="Madupu R."/>
            <person name="Nelson W.C."/>
            <person name="Rosovitz M.J."/>
            <person name="Sullivan S.A."/>
            <person name="Crabtree J."/>
            <person name="Creasy T."/>
            <person name="Davidsen T.M."/>
            <person name="Haft D.H."/>
            <person name="Zafar N."/>
            <person name="Zhou L."/>
            <person name="Halpin R."/>
            <person name="Holley T."/>
            <person name="Khouri H.M."/>
            <person name="Feldblyum T.V."/>
            <person name="White O."/>
            <person name="Fraser C.M."/>
            <person name="Chatterjee A.K."/>
            <person name="Cartinhour S."/>
            <person name="Schneider D."/>
            <person name="Mansfield J.W."/>
            <person name="Collmer A."/>
            <person name="Buell R."/>
        </authorList>
    </citation>
    <scope>NUCLEOTIDE SEQUENCE [LARGE SCALE GENOMIC DNA]</scope>
    <source>
        <strain>1448A / Race 6</strain>
    </source>
</reference>
<comment type="function">
    <text evidence="1">DNA-dependent RNA polymerase catalyzes the transcription of DNA into RNA using the four ribonucleoside triphosphates as substrates.</text>
</comment>
<comment type="catalytic activity">
    <reaction evidence="1">
        <text>RNA(n) + a ribonucleoside 5'-triphosphate = RNA(n+1) + diphosphate</text>
        <dbReference type="Rhea" id="RHEA:21248"/>
        <dbReference type="Rhea" id="RHEA-COMP:14527"/>
        <dbReference type="Rhea" id="RHEA-COMP:17342"/>
        <dbReference type="ChEBI" id="CHEBI:33019"/>
        <dbReference type="ChEBI" id="CHEBI:61557"/>
        <dbReference type="ChEBI" id="CHEBI:140395"/>
        <dbReference type="EC" id="2.7.7.6"/>
    </reaction>
</comment>
<comment type="cofactor">
    <cofactor evidence="1">
        <name>Mg(2+)</name>
        <dbReference type="ChEBI" id="CHEBI:18420"/>
    </cofactor>
    <text evidence="1">Binds 1 Mg(2+) ion per subunit.</text>
</comment>
<comment type="cofactor">
    <cofactor evidence="1">
        <name>Zn(2+)</name>
        <dbReference type="ChEBI" id="CHEBI:29105"/>
    </cofactor>
    <text evidence="1">Binds 2 Zn(2+) ions per subunit.</text>
</comment>
<comment type="subunit">
    <text evidence="1">The RNAP catalytic core consists of 2 alpha, 1 beta, 1 beta' and 1 omega subunit. When a sigma factor is associated with the core the holoenzyme is formed, which can initiate transcription.</text>
</comment>
<comment type="similarity">
    <text evidence="1">Belongs to the RNA polymerase beta' chain family.</text>
</comment>
<dbReference type="EC" id="2.7.7.6" evidence="1"/>
<dbReference type="EMBL" id="CP000058">
    <property type="protein sequence ID" value="AAZ37541.1"/>
    <property type="molecule type" value="Genomic_DNA"/>
</dbReference>
<dbReference type="RefSeq" id="WP_002555495.1">
    <property type="nucleotide sequence ID" value="NC_005773.3"/>
</dbReference>
<dbReference type="SMR" id="Q48D30"/>
<dbReference type="GeneID" id="69861588"/>
<dbReference type="KEGG" id="psp:PSPPH_4598"/>
<dbReference type="eggNOG" id="COG0086">
    <property type="taxonomic scope" value="Bacteria"/>
</dbReference>
<dbReference type="HOGENOM" id="CLU_000524_3_1_6"/>
<dbReference type="Proteomes" id="UP000000551">
    <property type="component" value="Chromosome"/>
</dbReference>
<dbReference type="GO" id="GO:0000428">
    <property type="term" value="C:DNA-directed RNA polymerase complex"/>
    <property type="evidence" value="ECO:0007669"/>
    <property type="project" value="UniProtKB-KW"/>
</dbReference>
<dbReference type="GO" id="GO:0003677">
    <property type="term" value="F:DNA binding"/>
    <property type="evidence" value="ECO:0007669"/>
    <property type="project" value="UniProtKB-UniRule"/>
</dbReference>
<dbReference type="GO" id="GO:0003899">
    <property type="term" value="F:DNA-directed RNA polymerase activity"/>
    <property type="evidence" value="ECO:0007669"/>
    <property type="project" value="UniProtKB-UniRule"/>
</dbReference>
<dbReference type="GO" id="GO:0000287">
    <property type="term" value="F:magnesium ion binding"/>
    <property type="evidence" value="ECO:0007669"/>
    <property type="project" value="UniProtKB-UniRule"/>
</dbReference>
<dbReference type="GO" id="GO:0008270">
    <property type="term" value="F:zinc ion binding"/>
    <property type="evidence" value="ECO:0007669"/>
    <property type="project" value="UniProtKB-UniRule"/>
</dbReference>
<dbReference type="GO" id="GO:0006351">
    <property type="term" value="P:DNA-templated transcription"/>
    <property type="evidence" value="ECO:0007669"/>
    <property type="project" value="UniProtKB-UniRule"/>
</dbReference>
<dbReference type="CDD" id="cd02655">
    <property type="entry name" value="RNAP_beta'_C"/>
    <property type="match status" value="1"/>
</dbReference>
<dbReference type="CDD" id="cd01609">
    <property type="entry name" value="RNAP_beta'_N"/>
    <property type="match status" value="1"/>
</dbReference>
<dbReference type="FunFam" id="1.10.132.30:FF:000003">
    <property type="entry name" value="DNA-directed RNA polymerase subunit beta"/>
    <property type="match status" value="1"/>
</dbReference>
<dbReference type="FunFam" id="1.10.150.390:FF:000002">
    <property type="entry name" value="DNA-directed RNA polymerase subunit beta"/>
    <property type="match status" value="1"/>
</dbReference>
<dbReference type="FunFam" id="1.10.40.90:FF:000001">
    <property type="entry name" value="DNA-directed RNA polymerase subunit beta"/>
    <property type="match status" value="1"/>
</dbReference>
<dbReference type="FunFam" id="4.10.860.120:FF:000001">
    <property type="entry name" value="DNA-directed RNA polymerase subunit beta"/>
    <property type="match status" value="1"/>
</dbReference>
<dbReference type="Gene3D" id="1.10.132.30">
    <property type="match status" value="1"/>
</dbReference>
<dbReference type="Gene3D" id="1.10.150.390">
    <property type="match status" value="1"/>
</dbReference>
<dbReference type="Gene3D" id="1.10.1790.20">
    <property type="match status" value="1"/>
</dbReference>
<dbReference type="Gene3D" id="1.10.40.90">
    <property type="match status" value="1"/>
</dbReference>
<dbReference type="Gene3D" id="2.40.40.20">
    <property type="match status" value="1"/>
</dbReference>
<dbReference type="Gene3D" id="2.40.50.100">
    <property type="match status" value="3"/>
</dbReference>
<dbReference type="Gene3D" id="4.10.860.120">
    <property type="entry name" value="RNA polymerase II, clamp domain"/>
    <property type="match status" value="1"/>
</dbReference>
<dbReference type="Gene3D" id="1.10.274.100">
    <property type="entry name" value="RNA polymerase Rpb1, domain 3"/>
    <property type="match status" value="2"/>
</dbReference>
<dbReference type="HAMAP" id="MF_01322">
    <property type="entry name" value="RNApol_bact_RpoC"/>
    <property type="match status" value="1"/>
</dbReference>
<dbReference type="InterPro" id="IPR045867">
    <property type="entry name" value="DNA-dir_RpoC_beta_prime"/>
</dbReference>
<dbReference type="InterPro" id="IPR012754">
    <property type="entry name" value="DNA-dir_RpoC_beta_prime_bact"/>
</dbReference>
<dbReference type="InterPro" id="IPR000722">
    <property type="entry name" value="RNA_pol_asu"/>
</dbReference>
<dbReference type="InterPro" id="IPR006592">
    <property type="entry name" value="RNA_pol_N"/>
</dbReference>
<dbReference type="InterPro" id="IPR007080">
    <property type="entry name" value="RNA_pol_Rpb1_1"/>
</dbReference>
<dbReference type="InterPro" id="IPR007066">
    <property type="entry name" value="RNA_pol_Rpb1_3"/>
</dbReference>
<dbReference type="InterPro" id="IPR042102">
    <property type="entry name" value="RNA_pol_Rpb1_3_sf"/>
</dbReference>
<dbReference type="InterPro" id="IPR007083">
    <property type="entry name" value="RNA_pol_Rpb1_4"/>
</dbReference>
<dbReference type="InterPro" id="IPR007081">
    <property type="entry name" value="RNA_pol_Rpb1_5"/>
</dbReference>
<dbReference type="InterPro" id="IPR044893">
    <property type="entry name" value="RNA_pol_Rpb1_clamp_domain"/>
</dbReference>
<dbReference type="InterPro" id="IPR038120">
    <property type="entry name" value="Rpb1_funnel_sf"/>
</dbReference>
<dbReference type="NCBIfam" id="TIGR02386">
    <property type="entry name" value="rpoC_TIGR"/>
    <property type="match status" value="1"/>
</dbReference>
<dbReference type="PANTHER" id="PTHR19376">
    <property type="entry name" value="DNA-DIRECTED RNA POLYMERASE"/>
    <property type="match status" value="1"/>
</dbReference>
<dbReference type="PANTHER" id="PTHR19376:SF54">
    <property type="entry name" value="DNA-DIRECTED RNA POLYMERASE SUBUNIT BETA"/>
    <property type="match status" value="1"/>
</dbReference>
<dbReference type="Pfam" id="PF04997">
    <property type="entry name" value="RNA_pol_Rpb1_1"/>
    <property type="match status" value="1"/>
</dbReference>
<dbReference type="Pfam" id="PF00623">
    <property type="entry name" value="RNA_pol_Rpb1_2"/>
    <property type="match status" value="2"/>
</dbReference>
<dbReference type="Pfam" id="PF04983">
    <property type="entry name" value="RNA_pol_Rpb1_3"/>
    <property type="match status" value="1"/>
</dbReference>
<dbReference type="Pfam" id="PF05000">
    <property type="entry name" value="RNA_pol_Rpb1_4"/>
    <property type="match status" value="1"/>
</dbReference>
<dbReference type="Pfam" id="PF04998">
    <property type="entry name" value="RNA_pol_Rpb1_5"/>
    <property type="match status" value="1"/>
</dbReference>
<dbReference type="SMART" id="SM00663">
    <property type="entry name" value="RPOLA_N"/>
    <property type="match status" value="1"/>
</dbReference>
<dbReference type="SUPFAM" id="SSF64484">
    <property type="entry name" value="beta and beta-prime subunits of DNA dependent RNA-polymerase"/>
    <property type="match status" value="1"/>
</dbReference>
<name>RPOC_PSE14</name>
<organism>
    <name type="scientific">Pseudomonas savastanoi pv. phaseolicola (strain 1448A / Race 6)</name>
    <name type="common">Pseudomonas syringae pv. phaseolicola (strain 1448A / Race 6)</name>
    <dbReference type="NCBI Taxonomy" id="264730"/>
    <lineage>
        <taxon>Bacteria</taxon>
        <taxon>Pseudomonadati</taxon>
        <taxon>Pseudomonadota</taxon>
        <taxon>Gammaproteobacteria</taxon>
        <taxon>Pseudomonadales</taxon>
        <taxon>Pseudomonadaceae</taxon>
        <taxon>Pseudomonas</taxon>
    </lineage>
</organism>
<protein>
    <recommendedName>
        <fullName evidence="1">DNA-directed RNA polymerase subunit beta'</fullName>
        <shortName evidence="1">RNAP subunit beta'</shortName>
        <ecNumber evidence="1">2.7.7.6</ecNumber>
    </recommendedName>
    <alternativeName>
        <fullName evidence="1">RNA polymerase subunit beta'</fullName>
    </alternativeName>
    <alternativeName>
        <fullName evidence="1">Transcriptase subunit beta'</fullName>
    </alternativeName>
</protein>
<feature type="chain" id="PRO_0000225567" description="DNA-directed RNA polymerase subunit beta'">
    <location>
        <begin position="1"/>
        <end position="1399"/>
    </location>
</feature>
<feature type="binding site" evidence="1">
    <location>
        <position position="70"/>
    </location>
    <ligand>
        <name>Zn(2+)</name>
        <dbReference type="ChEBI" id="CHEBI:29105"/>
        <label>1</label>
    </ligand>
</feature>
<feature type="binding site" evidence="1">
    <location>
        <position position="72"/>
    </location>
    <ligand>
        <name>Zn(2+)</name>
        <dbReference type="ChEBI" id="CHEBI:29105"/>
        <label>1</label>
    </ligand>
</feature>
<feature type="binding site" evidence="1">
    <location>
        <position position="85"/>
    </location>
    <ligand>
        <name>Zn(2+)</name>
        <dbReference type="ChEBI" id="CHEBI:29105"/>
        <label>1</label>
    </ligand>
</feature>
<feature type="binding site" evidence="1">
    <location>
        <position position="88"/>
    </location>
    <ligand>
        <name>Zn(2+)</name>
        <dbReference type="ChEBI" id="CHEBI:29105"/>
        <label>1</label>
    </ligand>
</feature>
<feature type="binding site" evidence="1">
    <location>
        <position position="460"/>
    </location>
    <ligand>
        <name>Mg(2+)</name>
        <dbReference type="ChEBI" id="CHEBI:18420"/>
    </ligand>
</feature>
<feature type="binding site" evidence="1">
    <location>
        <position position="462"/>
    </location>
    <ligand>
        <name>Mg(2+)</name>
        <dbReference type="ChEBI" id="CHEBI:18420"/>
    </ligand>
</feature>
<feature type="binding site" evidence="1">
    <location>
        <position position="464"/>
    </location>
    <ligand>
        <name>Mg(2+)</name>
        <dbReference type="ChEBI" id="CHEBI:18420"/>
    </ligand>
</feature>
<feature type="binding site" evidence="1">
    <location>
        <position position="814"/>
    </location>
    <ligand>
        <name>Zn(2+)</name>
        <dbReference type="ChEBI" id="CHEBI:29105"/>
        <label>2</label>
    </ligand>
</feature>
<feature type="binding site" evidence="1">
    <location>
        <position position="888"/>
    </location>
    <ligand>
        <name>Zn(2+)</name>
        <dbReference type="ChEBI" id="CHEBI:29105"/>
        <label>2</label>
    </ligand>
</feature>
<feature type="binding site" evidence="1">
    <location>
        <position position="895"/>
    </location>
    <ligand>
        <name>Zn(2+)</name>
        <dbReference type="ChEBI" id="CHEBI:29105"/>
        <label>2</label>
    </ligand>
</feature>
<feature type="binding site" evidence="1">
    <location>
        <position position="898"/>
    </location>
    <ligand>
        <name>Zn(2+)</name>
        <dbReference type="ChEBI" id="CHEBI:29105"/>
        <label>2</label>
    </ligand>
</feature>